<reference key="1">
    <citation type="journal article" date="1995" name="DNA Res.">
        <title>Sequence analysis of the genome of the unicellular cyanobacterium Synechocystis sp. strain PCC6803. I. Sequence features in the 1 Mb region from map positions 64% to 92% of the genome.</title>
        <authorList>
            <person name="Kaneko T."/>
            <person name="Tanaka A."/>
            <person name="Sato S."/>
            <person name="Kotani H."/>
            <person name="Sazuka T."/>
            <person name="Miyajima N."/>
            <person name="Sugiura M."/>
            <person name="Tabata S."/>
        </authorList>
    </citation>
    <scope>NUCLEOTIDE SEQUENCE [LARGE SCALE GENOMIC DNA]</scope>
    <source>
        <strain>ATCC 27184 / PCC 6803 / N-1</strain>
    </source>
</reference>
<reference key="2">
    <citation type="journal article" date="1996" name="DNA Res.">
        <title>Sequence analysis of the genome of the unicellular cyanobacterium Synechocystis sp. strain PCC6803. II. Sequence determination of the entire genome and assignment of potential protein-coding regions.</title>
        <authorList>
            <person name="Kaneko T."/>
            <person name="Sato S."/>
            <person name="Kotani H."/>
            <person name="Tanaka A."/>
            <person name="Asamizu E."/>
            <person name="Nakamura Y."/>
            <person name="Miyajima N."/>
            <person name="Hirosawa M."/>
            <person name="Sugiura M."/>
            <person name="Sasamoto S."/>
            <person name="Kimura T."/>
            <person name="Hosouchi T."/>
            <person name="Matsuno A."/>
            <person name="Muraki A."/>
            <person name="Nakazaki N."/>
            <person name="Naruo K."/>
            <person name="Okumura S."/>
            <person name="Shimpo S."/>
            <person name="Takeuchi C."/>
            <person name="Wada T."/>
            <person name="Watanabe A."/>
            <person name="Yamada M."/>
            <person name="Yasuda M."/>
            <person name="Tabata S."/>
        </authorList>
    </citation>
    <scope>NUCLEOTIDE SEQUENCE [LARGE SCALE GENOMIC DNA]</scope>
    <source>
        <strain>ATCC 27184 / PCC 6803 / Kazusa</strain>
    </source>
</reference>
<gene>
    <name type="primary">gnd</name>
    <name type="ordered locus">sll0329</name>
</gene>
<dbReference type="EC" id="1.1.1.44"/>
<dbReference type="EMBL" id="BA000022">
    <property type="protein sequence ID" value="BAA10105.1"/>
    <property type="molecule type" value="Genomic_DNA"/>
</dbReference>
<dbReference type="PIR" id="S76127">
    <property type="entry name" value="S76127"/>
</dbReference>
<dbReference type="SMR" id="P52208"/>
<dbReference type="FunCoup" id="P52208">
    <property type="interactions" value="338"/>
</dbReference>
<dbReference type="STRING" id="1148.gene:10499597"/>
<dbReference type="PaxDb" id="1148-1001479"/>
<dbReference type="EnsemblBacteria" id="BAA10105">
    <property type="protein sequence ID" value="BAA10105"/>
    <property type="gene ID" value="BAA10105"/>
</dbReference>
<dbReference type="KEGG" id="syn:sll0329"/>
<dbReference type="eggNOG" id="COG0362">
    <property type="taxonomic scope" value="Bacteria"/>
</dbReference>
<dbReference type="InParanoid" id="P52208"/>
<dbReference type="PhylomeDB" id="P52208"/>
<dbReference type="BRENDA" id="1.1.1.44">
    <property type="organism ID" value="382"/>
</dbReference>
<dbReference type="SABIO-RK" id="P52208"/>
<dbReference type="UniPathway" id="UPA00115">
    <property type="reaction ID" value="UER00410"/>
</dbReference>
<dbReference type="Proteomes" id="UP000001425">
    <property type="component" value="Chromosome"/>
</dbReference>
<dbReference type="GO" id="GO:0005829">
    <property type="term" value="C:cytosol"/>
    <property type="evidence" value="ECO:0000318"/>
    <property type="project" value="GO_Central"/>
</dbReference>
<dbReference type="GO" id="GO:0050661">
    <property type="term" value="F:NADP binding"/>
    <property type="evidence" value="ECO:0000318"/>
    <property type="project" value="GO_Central"/>
</dbReference>
<dbReference type="GO" id="GO:0004616">
    <property type="term" value="F:phosphogluconate dehydrogenase (decarboxylating) activity"/>
    <property type="evidence" value="ECO:0000318"/>
    <property type="project" value="GO_Central"/>
</dbReference>
<dbReference type="GO" id="GO:0019521">
    <property type="term" value="P:D-gluconate metabolic process"/>
    <property type="evidence" value="ECO:0007669"/>
    <property type="project" value="UniProtKB-KW"/>
</dbReference>
<dbReference type="GO" id="GO:0016054">
    <property type="term" value="P:organic acid catabolic process"/>
    <property type="evidence" value="ECO:0007669"/>
    <property type="project" value="UniProtKB-ARBA"/>
</dbReference>
<dbReference type="GO" id="GO:0009051">
    <property type="term" value="P:pentose-phosphate shunt, oxidative branch"/>
    <property type="evidence" value="ECO:0000318"/>
    <property type="project" value="GO_Central"/>
</dbReference>
<dbReference type="FunFam" id="1.10.1040.10:FF:000002">
    <property type="entry name" value="6-phosphogluconate dehydrogenase, decarboxylating"/>
    <property type="match status" value="1"/>
</dbReference>
<dbReference type="FunFam" id="1.20.5.320:FF:000001">
    <property type="entry name" value="6-phosphogluconate dehydrogenase, decarboxylating"/>
    <property type="match status" value="1"/>
</dbReference>
<dbReference type="FunFam" id="3.40.50.720:FF:000007">
    <property type="entry name" value="6-phosphogluconate dehydrogenase, decarboxylating"/>
    <property type="match status" value="1"/>
</dbReference>
<dbReference type="Gene3D" id="1.20.5.320">
    <property type="entry name" value="6-Phosphogluconate Dehydrogenase, domain 3"/>
    <property type="match status" value="1"/>
</dbReference>
<dbReference type="Gene3D" id="1.10.1040.10">
    <property type="entry name" value="N-(1-d-carboxylethyl)-l-norvaline Dehydrogenase, domain 2"/>
    <property type="match status" value="1"/>
</dbReference>
<dbReference type="Gene3D" id="3.40.50.720">
    <property type="entry name" value="NAD(P)-binding Rossmann-like Domain"/>
    <property type="match status" value="1"/>
</dbReference>
<dbReference type="InterPro" id="IPR008927">
    <property type="entry name" value="6-PGluconate_DH-like_C_sf"/>
</dbReference>
<dbReference type="InterPro" id="IPR013328">
    <property type="entry name" value="6PGD_dom2"/>
</dbReference>
<dbReference type="InterPro" id="IPR006114">
    <property type="entry name" value="6PGDH_C"/>
</dbReference>
<dbReference type="InterPro" id="IPR006113">
    <property type="entry name" value="6PGDH_Gnd/GntZ"/>
</dbReference>
<dbReference type="InterPro" id="IPR006115">
    <property type="entry name" value="6PGDH_NADP-bd"/>
</dbReference>
<dbReference type="InterPro" id="IPR006184">
    <property type="entry name" value="6PGdom_BS"/>
</dbReference>
<dbReference type="InterPro" id="IPR036291">
    <property type="entry name" value="NAD(P)-bd_dom_sf"/>
</dbReference>
<dbReference type="InterPro" id="IPR006183">
    <property type="entry name" value="Pgluconate_DH"/>
</dbReference>
<dbReference type="NCBIfam" id="TIGR00873">
    <property type="entry name" value="gnd"/>
    <property type="match status" value="1"/>
</dbReference>
<dbReference type="NCBIfam" id="NF006765">
    <property type="entry name" value="PRK09287.1"/>
    <property type="match status" value="1"/>
</dbReference>
<dbReference type="PANTHER" id="PTHR11811">
    <property type="entry name" value="6-PHOSPHOGLUCONATE DEHYDROGENASE"/>
    <property type="match status" value="1"/>
</dbReference>
<dbReference type="Pfam" id="PF00393">
    <property type="entry name" value="6PGD"/>
    <property type="match status" value="1"/>
</dbReference>
<dbReference type="Pfam" id="PF03446">
    <property type="entry name" value="NAD_binding_2"/>
    <property type="match status" value="1"/>
</dbReference>
<dbReference type="PIRSF" id="PIRSF000109">
    <property type="entry name" value="6PGD"/>
    <property type="match status" value="1"/>
</dbReference>
<dbReference type="PRINTS" id="PR00076">
    <property type="entry name" value="6PGDHDRGNASE"/>
</dbReference>
<dbReference type="SMART" id="SM01350">
    <property type="entry name" value="6PGD"/>
    <property type="match status" value="1"/>
</dbReference>
<dbReference type="SUPFAM" id="SSF48179">
    <property type="entry name" value="6-phosphogluconate dehydrogenase C-terminal domain-like"/>
    <property type="match status" value="1"/>
</dbReference>
<dbReference type="SUPFAM" id="SSF51735">
    <property type="entry name" value="NAD(P)-binding Rossmann-fold domains"/>
    <property type="match status" value="1"/>
</dbReference>
<dbReference type="PROSITE" id="PS00461">
    <property type="entry name" value="6PGD"/>
    <property type="match status" value="1"/>
</dbReference>
<sequence>MQFNVAIMTKRTFGVIGLAVMGENLALNVESRGFPIAVFNRSPNKTEKFMAERAVGKDIKAAYTVEEFVQLLERPRKILVMVKAGGPVDAVINELKPLLEEGDMIIDGGNSLYEDTERRTKDLEATGLGFVGMGVSGGEEGALLGPSLMPGGTPAAYKELEPILTKIAAQVEDPDNPACVTFIGPGGAGHYVKMVHNGIEYGDMQLIAEAYDILKNGLGLSNEQLHEVFGQWNQTDELNSFLIEISTDIFAKKDPETGGHLIDYILDAAGQKGTGRWTVMSGLELGVPIPTIYAAVNARVMSSLKEERVAASGQLSGPSKTFSGDVEAWIPKVRDALYCSKMCSYAQGMALIAKASQEFGYDVNLPEIARIWKGGCIIRAGFLDKIKKAFKDNPQLPNLLLAPEFKQSILDRQGPWREVLMLANEMGIAVPAFSSSLDYFDSYRRAVLPQNLTQAQRDYFGAHTYERTDKPRGEFFHTEWLD</sequence>
<evidence type="ECO:0000250" key="1"/>
<evidence type="ECO:0000305" key="2"/>
<keyword id="KW-0311">Gluconate utilization</keyword>
<keyword id="KW-0521">NADP</keyword>
<keyword id="KW-0560">Oxidoreductase</keyword>
<keyword id="KW-0570">Pentose shunt</keyword>
<keyword id="KW-1185">Reference proteome</keyword>
<feature type="chain" id="PRO_0000090061" description="6-phosphogluconate dehydrogenase, decarboxylating">
    <location>
        <begin position="1"/>
        <end position="482"/>
    </location>
</feature>
<feature type="active site" description="Proton acceptor" evidence="1">
    <location>
        <position position="193"/>
    </location>
</feature>
<feature type="active site" description="Proton donor" evidence="1">
    <location>
        <position position="200"/>
    </location>
</feature>
<feature type="binding site" evidence="1">
    <location>
        <begin position="17"/>
        <end position="22"/>
    </location>
    <ligand>
        <name>NADP(+)</name>
        <dbReference type="ChEBI" id="CHEBI:58349"/>
    </ligand>
</feature>
<feature type="binding site" evidence="1">
    <location>
        <begin position="40"/>
        <end position="42"/>
    </location>
    <ligand>
        <name>NADP(+)</name>
        <dbReference type="ChEBI" id="CHEBI:58349"/>
    </ligand>
</feature>
<feature type="binding site" evidence="1">
    <location>
        <begin position="82"/>
        <end position="84"/>
    </location>
    <ligand>
        <name>NADP(+)</name>
        <dbReference type="ChEBI" id="CHEBI:58349"/>
    </ligand>
</feature>
<feature type="binding site" evidence="1">
    <location>
        <position position="110"/>
    </location>
    <ligand>
        <name>NADP(+)</name>
        <dbReference type="ChEBI" id="CHEBI:58349"/>
    </ligand>
</feature>
<feature type="binding site" description="in other chain" evidence="1">
    <location>
        <position position="110"/>
    </location>
    <ligand>
        <name>substrate</name>
        <note>ligand shared between dimeric partners</note>
    </ligand>
</feature>
<feature type="binding site" description="in other chain" evidence="1">
    <location>
        <begin position="136"/>
        <end position="138"/>
    </location>
    <ligand>
        <name>substrate</name>
        <note>ligand shared between dimeric partners</note>
    </ligand>
</feature>
<feature type="binding site" description="in other chain" evidence="1">
    <location>
        <begin position="196"/>
        <end position="197"/>
    </location>
    <ligand>
        <name>substrate</name>
        <note>ligand shared between dimeric partners</note>
    </ligand>
</feature>
<feature type="binding site" description="in other chain" evidence="1">
    <location>
        <position position="201"/>
    </location>
    <ligand>
        <name>substrate</name>
        <note>ligand shared between dimeric partners</note>
    </ligand>
</feature>
<feature type="binding site" description="in other chain" evidence="1">
    <location>
        <position position="272"/>
    </location>
    <ligand>
        <name>substrate</name>
        <note>ligand shared between dimeric partners</note>
    </ligand>
</feature>
<feature type="binding site" description="in other chain" evidence="1">
    <location>
        <position position="299"/>
    </location>
    <ligand>
        <name>substrate</name>
        <note>ligand shared between dimeric partners</note>
    </ligand>
</feature>
<feature type="binding site" evidence="1">
    <location>
        <position position="457"/>
    </location>
    <ligand>
        <name>substrate</name>
        <note>ligand shared between dimeric partners</note>
    </ligand>
</feature>
<feature type="binding site" evidence="1">
    <location>
        <position position="463"/>
    </location>
    <ligand>
        <name>substrate</name>
        <note>ligand shared between dimeric partners</note>
    </ligand>
</feature>
<organism>
    <name type="scientific">Synechocystis sp. (strain ATCC 27184 / PCC 6803 / Kazusa)</name>
    <dbReference type="NCBI Taxonomy" id="1111708"/>
    <lineage>
        <taxon>Bacteria</taxon>
        <taxon>Bacillati</taxon>
        <taxon>Cyanobacteriota</taxon>
        <taxon>Cyanophyceae</taxon>
        <taxon>Synechococcales</taxon>
        <taxon>Merismopediaceae</taxon>
        <taxon>Synechocystis</taxon>
    </lineage>
</organism>
<protein>
    <recommendedName>
        <fullName>6-phosphogluconate dehydrogenase, decarboxylating</fullName>
        <ecNumber>1.1.1.44</ecNumber>
    </recommendedName>
</protein>
<comment type="function">
    <text evidence="1">Catalyzes the oxidative decarboxylation of 6-phosphogluconate to ribulose 5-phosphate and CO(2), with concomitant reduction of NADP to NADPH.</text>
</comment>
<comment type="catalytic activity">
    <reaction>
        <text>6-phospho-D-gluconate + NADP(+) = D-ribulose 5-phosphate + CO2 + NADPH</text>
        <dbReference type="Rhea" id="RHEA:10116"/>
        <dbReference type="ChEBI" id="CHEBI:16526"/>
        <dbReference type="ChEBI" id="CHEBI:57783"/>
        <dbReference type="ChEBI" id="CHEBI:58121"/>
        <dbReference type="ChEBI" id="CHEBI:58349"/>
        <dbReference type="ChEBI" id="CHEBI:58759"/>
        <dbReference type="EC" id="1.1.1.44"/>
    </reaction>
</comment>
<comment type="pathway">
    <text>Carbohydrate degradation; pentose phosphate pathway; D-ribulose 5-phosphate from D-glucose 6-phosphate (oxidative stage): step 3/3.</text>
</comment>
<comment type="subunit">
    <text evidence="1">Homodimer.</text>
</comment>
<comment type="similarity">
    <text evidence="2">Belongs to the 6-phosphogluconate dehydrogenase family.</text>
</comment>
<name>6PGD_SYNY3</name>
<proteinExistence type="inferred from homology"/>
<accession>P52208</accession>